<sequence>MSKNKLSKGQQRRVNANHQRRLKTSKEKPDYDDNLFGEPDEGIVISRFGMHADVESADGDVHRCNIRRTIRSLVTGDRVVWRPGKPAAEGVNVKGIVEAVHERTSVLTRPDFYDGVKPIAANIDQIVIVSAILPELSLNIIDRYLVACETLQIEPIIVLNKIDLLDDEGMEFVNEQMDIYRNIGYRVLMVSSHTQDGLKPLEEALTGRISIFAGQSGVGKSSLLNALLGLQKEILTNDVSDNSGLGQHTTTAARLYHFPHGGDVIDSPGVREFGLWHLEPEQITQGFVEFHDYLGLCKYRDCKHDTDPGCAIREAVEEGKIAETRFENYHRILESMAQVKTRKNFSDTDD</sequence>
<reference key="1">
    <citation type="journal article" date="2002" name="Proc. Natl. Acad. Sci. U.S.A.">
        <title>Extensive mosaic structure revealed by the complete genome sequence of uropathogenic Escherichia coli.</title>
        <authorList>
            <person name="Welch R.A."/>
            <person name="Burland V."/>
            <person name="Plunkett G. III"/>
            <person name="Redford P."/>
            <person name="Roesch P."/>
            <person name="Rasko D."/>
            <person name="Buckles E.L."/>
            <person name="Liou S.-R."/>
            <person name="Boutin A."/>
            <person name="Hackett J."/>
            <person name="Stroud D."/>
            <person name="Mayhew G.F."/>
            <person name="Rose D.J."/>
            <person name="Zhou S."/>
            <person name="Schwartz D.C."/>
            <person name="Perna N.T."/>
            <person name="Mobley H.L.T."/>
            <person name="Donnenberg M.S."/>
            <person name="Blattner F.R."/>
        </authorList>
    </citation>
    <scope>NUCLEOTIDE SEQUENCE [LARGE SCALE GENOMIC DNA]</scope>
    <source>
        <strain>CFT073 / ATCC 700928 / UPEC</strain>
    </source>
</reference>
<protein>
    <recommendedName>
        <fullName evidence="1">Small ribosomal subunit biogenesis GTPase RsgA</fullName>
        <ecNumber evidence="1">3.6.1.-</ecNumber>
    </recommendedName>
</protein>
<accession>Q8FAL3</accession>
<proteinExistence type="inferred from homology"/>
<comment type="function">
    <text evidence="1">One of several proteins that assist in the late maturation steps of the functional core of the 30S ribosomal subunit. Helps release RbfA from mature subunits. May play a role in the assembly of ribosomal proteins into the subunit. Circularly permuted GTPase that catalyzes slow GTP hydrolysis, GTPase activity is stimulated by the 30S ribosomal subunit.</text>
</comment>
<comment type="cofactor">
    <cofactor evidence="1">
        <name>Zn(2+)</name>
        <dbReference type="ChEBI" id="CHEBI:29105"/>
    </cofactor>
    <text evidence="1">Binds 1 zinc ion per subunit.</text>
</comment>
<comment type="subunit">
    <text evidence="1">Monomer. Associates with 30S ribosomal subunit, binds 16S rRNA.</text>
</comment>
<comment type="subcellular location">
    <subcellularLocation>
        <location evidence="1">Cytoplasm</location>
    </subcellularLocation>
</comment>
<comment type="similarity">
    <text evidence="1">Belongs to the TRAFAC class YlqF/YawG GTPase family. RsgA subfamily.</text>
</comment>
<comment type="sequence caution" evidence="4">
    <conflict type="erroneous initiation">
        <sequence resource="EMBL-CDS" id="AAN83670"/>
    </conflict>
    <text>Truncated N-terminus.</text>
</comment>
<gene>
    <name evidence="1" type="primary">rsgA</name>
    <name type="ordered locus">c5248</name>
</gene>
<evidence type="ECO:0000255" key="1">
    <source>
        <dbReference type="HAMAP-Rule" id="MF_01820"/>
    </source>
</evidence>
<evidence type="ECO:0000255" key="2">
    <source>
        <dbReference type="PROSITE-ProRule" id="PRU01058"/>
    </source>
</evidence>
<evidence type="ECO:0000256" key="3">
    <source>
        <dbReference type="SAM" id="MobiDB-lite"/>
    </source>
</evidence>
<evidence type="ECO:0000305" key="4"/>
<name>RSGA_ECOL6</name>
<organism>
    <name type="scientific">Escherichia coli O6:H1 (strain CFT073 / ATCC 700928 / UPEC)</name>
    <dbReference type="NCBI Taxonomy" id="199310"/>
    <lineage>
        <taxon>Bacteria</taxon>
        <taxon>Pseudomonadati</taxon>
        <taxon>Pseudomonadota</taxon>
        <taxon>Gammaproteobacteria</taxon>
        <taxon>Enterobacterales</taxon>
        <taxon>Enterobacteriaceae</taxon>
        <taxon>Escherichia</taxon>
    </lineage>
</organism>
<feature type="chain" id="PRO_0000008151" description="Small ribosomal subunit biogenesis GTPase RsgA">
    <location>
        <begin position="1"/>
        <end position="350"/>
    </location>
</feature>
<feature type="domain" description="CP-type G" evidence="2">
    <location>
        <begin position="104"/>
        <end position="273"/>
    </location>
</feature>
<feature type="region of interest" description="Disordered" evidence="3">
    <location>
        <begin position="1"/>
        <end position="33"/>
    </location>
</feature>
<feature type="compositionally biased region" description="Polar residues" evidence="3">
    <location>
        <begin position="1"/>
        <end position="17"/>
    </location>
</feature>
<feature type="binding site" evidence="1">
    <location>
        <begin position="160"/>
        <end position="163"/>
    </location>
    <ligand>
        <name>GTP</name>
        <dbReference type="ChEBI" id="CHEBI:37565"/>
    </ligand>
</feature>
<feature type="binding site" evidence="1">
    <location>
        <begin position="214"/>
        <end position="222"/>
    </location>
    <ligand>
        <name>GTP</name>
        <dbReference type="ChEBI" id="CHEBI:37565"/>
    </ligand>
</feature>
<feature type="binding site" evidence="1">
    <location>
        <position position="297"/>
    </location>
    <ligand>
        <name>Zn(2+)</name>
        <dbReference type="ChEBI" id="CHEBI:29105"/>
    </ligand>
</feature>
<feature type="binding site" evidence="1">
    <location>
        <position position="302"/>
    </location>
    <ligand>
        <name>Zn(2+)</name>
        <dbReference type="ChEBI" id="CHEBI:29105"/>
    </ligand>
</feature>
<feature type="binding site" evidence="1">
    <location>
        <position position="304"/>
    </location>
    <ligand>
        <name>Zn(2+)</name>
        <dbReference type="ChEBI" id="CHEBI:29105"/>
    </ligand>
</feature>
<feature type="binding site" evidence="1">
    <location>
        <position position="310"/>
    </location>
    <ligand>
        <name>Zn(2+)</name>
        <dbReference type="ChEBI" id="CHEBI:29105"/>
    </ligand>
</feature>
<keyword id="KW-0963">Cytoplasm</keyword>
<keyword id="KW-0342">GTP-binding</keyword>
<keyword id="KW-0378">Hydrolase</keyword>
<keyword id="KW-0479">Metal-binding</keyword>
<keyword id="KW-0547">Nucleotide-binding</keyword>
<keyword id="KW-1185">Reference proteome</keyword>
<keyword id="KW-0690">Ribosome biogenesis</keyword>
<keyword id="KW-0694">RNA-binding</keyword>
<keyword id="KW-0699">rRNA-binding</keyword>
<keyword id="KW-0862">Zinc</keyword>
<dbReference type="EC" id="3.6.1.-" evidence="1"/>
<dbReference type="EMBL" id="AE014075">
    <property type="protein sequence ID" value="AAN83670.1"/>
    <property type="status" value="ALT_INIT"/>
    <property type="molecule type" value="Genomic_DNA"/>
</dbReference>
<dbReference type="RefSeq" id="WP_000041976.1">
    <property type="nucleotide sequence ID" value="NZ_CP051263.1"/>
</dbReference>
<dbReference type="SMR" id="Q8FAL3"/>
<dbReference type="STRING" id="199310.c5248"/>
<dbReference type="KEGG" id="ecc:c5248"/>
<dbReference type="eggNOG" id="COG1162">
    <property type="taxonomic scope" value="Bacteria"/>
</dbReference>
<dbReference type="HOGENOM" id="CLU_033617_2_0_6"/>
<dbReference type="Proteomes" id="UP000001410">
    <property type="component" value="Chromosome"/>
</dbReference>
<dbReference type="GO" id="GO:0005737">
    <property type="term" value="C:cytoplasm"/>
    <property type="evidence" value="ECO:0007669"/>
    <property type="project" value="UniProtKB-SubCell"/>
</dbReference>
<dbReference type="GO" id="GO:0005525">
    <property type="term" value="F:GTP binding"/>
    <property type="evidence" value="ECO:0007669"/>
    <property type="project" value="UniProtKB-UniRule"/>
</dbReference>
<dbReference type="GO" id="GO:0003924">
    <property type="term" value="F:GTPase activity"/>
    <property type="evidence" value="ECO:0007669"/>
    <property type="project" value="UniProtKB-UniRule"/>
</dbReference>
<dbReference type="GO" id="GO:0046872">
    <property type="term" value="F:metal ion binding"/>
    <property type="evidence" value="ECO:0007669"/>
    <property type="project" value="UniProtKB-KW"/>
</dbReference>
<dbReference type="GO" id="GO:0019843">
    <property type="term" value="F:rRNA binding"/>
    <property type="evidence" value="ECO:0007669"/>
    <property type="project" value="UniProtKB-KW"/>
</dbReference>
<dbReference type="GO" id="GO:0042274">
    <property type="term" value="P:ribosomal small subunit biogenesis"/>
    <property type="evidence" value="ECO:0007669"/>
    <property type="project" value="UniProtKB-UniRule"/>
</dbReference>
<dbReference type="CDD" id="cd01854">
    <property type="entry name" value="YjeQ_EngC"/>
    <property type="match status" value="1"/>
</dbReference>
<dbReference type="FunFam" id="1.10.40.50:FF:000001">
    <property type="entry name" value="Small ribosomal subunit biogenesis GTPase RsgA"/>
    <property type="match status" value="1"/>
</dbReference>
<dbReference type="FunFam" id="2.40.50.140:FF:000122">
    <property type="entry name" value="Small ribosomal subunit biogenesis GTPase RsgA"/>
    <property type="match status" value="1"/>
</dbReference>
<dbReference type="FunFam" id="3.40.50.300:FF:000389">
    <property type="entry name" value="Small ribosomal subunit biogenesis GTPase RsgA"/>
    <property type="match status" value="1"/>
</dbReference>
<dbReference type="Gene3D" id="2.40.50.140">
    <property type="entry name" value="Nucleic acid-binding proteins"/>
    <property type="match status" value="1"/>
</dbReference>
<dbReference type="Gene3D" id="3.40.50.300">
    <property type="entry name" value="P-loop containing nucleotide triphosphate hydrolases"/>
    <property type="match status" value="1"/>
</dbReference>
<dbReference type="Gene3D" id="1.10.40.50">
    <property type="entry name" value="Probable gtpase engc, domain 3"/>
    <property type="match status" value="1"/>
</dbReference>
<dbReference type="HAMAP" id="MF_01820">
    <property type="entry name" value="GTPase_RsgA"/>
    <property type="match status" value="1"/>
</dbReference>
<dbReference type="InterPro" id="IPR030378">
    <property type="entry name" value="G_CP_dom"/>
</dbReference>
<dbReference type="InterPro" id="IPR012340">
    <property type="entry name" value="NA-bd_OB-fold"/>
</dbReference>
<dbReference type="InterPro" id="IPR027417">
    <property type="entry name" value="P-loop_NTPase"/>
</dbReference>
<dbReference type="InterPro" id="IPR004881">
    <property type="entry name" value="Ribosome_biogen_GTPase_RsgA"/>
</dbReference>
<dbReference type="InterPro" id="IPR010914">
    <property type="entry name" value="RsgA_GTPase_dom"/>
</dbReference>
<dbReference type="NCBIfam" id="NF008931">
    <property type="entry name" value="PRK12288.1"/>
    <property type="match status" value="1"/>
</dbReference>
<dbReference type="NCBIfam" id="TIGR00157">
    <property type="entry name" value="ribosome small subunit-dependent GTPase A"/>
    <property type="match status" value="1"/>
</dbReference>
<dbReference type="PANTHER" id="PTHR32120">
    <property type="entry name" value="SMALL RIBOSOMAL SUBUNIT BIOGENESIS GTPASE RSGA"/>
    <property type="match status" value="1"/>
</dbReference>
<dbReference type="PANTHER" id="PTHR32120:SF11">
    <property type="entry name" value="SMALL RIBOSOMAL SUBUNIT BIOGENESIS GTPASE RSGA 1, MITOCHONDRIAL-RELATED"/>
    <property type="match status" value="1"/>
</dbReference>
<dbReference type="Pfam" id="PF03193">
    <property type="entry name" value="RsgA_GTPase"/>
    <property type="match status" value="1"/>
</dbReference>
<dbReference type="SUPFAM" id="SSF52540">
    <property type="entry name" value="P-loop containing nucleoside triphosphate hydrolases"/>
    <property type="match status" value="1"/>
</dbReference>
<dbReference type="PROSITE" id="PS50936">
    <property type="entry name" value="ENGC_GTPASE"/>
    <property type="match status" value="1"/>
</dbReference>
<dbReference type="PROSITE" id="PS51721">
    <property type="entry name" value="G_CP"/>
    <property type="match status" value="1"/>
</dbReference>